<feature type="chain" id="PRO_1000044686" description="Probable nicotinate-nucleotide adenylyltransferase">
    <location>
        <begin position="1"/>
        <end position="190"/>
    </location>
</feature>
<keyword id="KW-0067">ATP-binding</keyword>
<keyword id="KW-0520">NAD</keyword>
<keyword id="KW-0547">Nucleotide-binding</keyword>
<keyword id="KW-0548">Nucleotidyltransferase</keyword>
<keyword id="KW-0662">Pyridine nucleotide biosynthesis</keyword>
<keyword id="KW-1185">Reference proteome</keyword>
<keyword id="KW-0808">Transferase</keyword>
<evidence type="ECO:0000255" key="1">
    <source>
        <dbReference type="HAMAP-Rule" id="MF_00244"/>
    </source>
</evidence>
<dbReference type="EC" id="2.7.7.18" evidence="1"/>
<dbReference type="EMBL" id="CP000113">
    <property type="protein sequence ID" value="ABF89573.1"/>
    <property type="molecule type" value="Genomic_DNA"/>
</dbReference>
<dbReference type="RefSeq" id="WP_011554188.1">
    <property type="nucleotide sequence ID" value="NC_008095.1"/>
</dbReference>
<dbReference type="SMR" id="Q1D4R3"/>
<dbReference type="STRING" id="246197.MXAN_4185"/>
<dbReference type="EnsemblBacteria" id="ABF89573">
    <property type="protein sequence ID" value="ABF89573"/>
    <property type="gene ID" value="MXAN_4185"/>
</dbReference>
<dbReference type="GeneID" id="41361503"/>
<dbReference type="KEGG" id="mxa:MXAN_4185"/>
<dbReference type="eggNOG" id="COG1057">
    <property type="taxonomic scope" value="Bacteria"/>
</dbReference>
<dbReference type="HOGENOM" id="CLU_069765_3_1_7"/>
<dbReference type="OrthoDB" id="5295945at2"/>
<dbReference type="UniPathway" id="UPA00253">
    <property type="reaction ID" value="UER00332"/>
</dbReference>
<dbReference type="Proteomes" id="UP000002402">
    <property type="component" value="Chromosome"/>
</dbReference>
<dbReference type="GO" id="GO:0005524">
    <property type="term" value="F:ATP binding"/>
    <property type="evidence" value="ECO:0007669"/>
    <property type="project" value="UniProtKB-KW"/>
</dbReference>
<dbReference type="GO" id="GO:0004515">
    <property type="term" value="F:nicotinate-nucleotide adenylyltransferase activity"/>
    <property type="evidence" value="ECO:0007669"/>
    <property type="project" value="UniProtKB-UniRule"/>
</dbReference>
<dbReference type="GO" id="GO:0009435">
    <property type="term" value="P:NAD biosynthetic process"/>
    <property type="evidence" value="ECO:0007669"/>
    <property type="project" value="UniProtKB-UniRule"/>
</dbReference>
<dbReference type="CDD" id="cd02165">
    <property type="entry name" value="NMNAT"/>
    <property type="match status" value="1"/>
</dbReference>
<dbReference type="Gene3D" id="3.40.50.620">
    <property type="entry name" value="HUPs"/>
    <property type="match status" value="1"/>
</dbReference>
<dbReference type="HAMAP" id="MF_00244">
    <property type="entry name" value="NaMN_adenylyltr"/>
    <property type="match status" value="1"/>
</dbReference>
<dbReference type="InterPro" id="IPR004821">
    <property type="entry name" value="Cyt_trans-like"/>
</dbReference>
<dbReference type="InterPro" id="IPR005248">
    <property type="entry name" value="NadD/NMNAT"/>
</dbReference>
<dbReference type="InterPro" id="IPR014729">
    <property type="entry name" value="Rossmann-like_a/b/a_fold"/>
</dbReference>
<dbReference type="NCBIfam" id="TIGR00482">
    <property type="entry name" value="nicotinate (nicotinamide) nucleotide adenylyltransferase"/>
    <property type="match status" value="1"/>
</dbReference>
<dbReference type="PANTHER" id="PTHR39321">
    <property type="entry name" value="NICOTINATE-NUCLEOTIDE ADENYLYLTRANSFERASE-RELATED"/>
    <property type="match status" value="1"/>
</dbReference>
<dbReference type="PANTHER" id="PTHR39321:SF3">
    <property type="entry name" value="PHOSPHOPANTETHEINE ADENYLYLTRANSFERASE"/>
    <property type="match status" value="1"/>
</dbReference>
<dbReference type="Pfam" id="PF01467">
    <property type="entry name" value="CTP_transf_like"/>
    <property type="match status" value="1"/>
</dbReference>
<dbReference type="SUPFAM" id="SSF52374">
    <property type="entry name" value="Nucleotidylyl transferase"/>
    <property type="match status" value="1"/>
</dbReference>
<sequence>MRPAVQVALLGGSFNPPHVGHLMAATYVHATQDVDEVWLMPSWQHPFGKQMEPFEHRVAMCDALCAETSGWLKTSRIEQEPGLSGRTVDTLTLLVARHPDIRWSIIIGSDILRDLPHWKDFHRIEELSRVMVLNRAGYPAPNTLGPPLAEVSSTLIRDLLARGEAPSDLVPARAIAYAREHGLYGLKRTP</sequence>
<proteinExistence type="inferred from homology"/>
<name>NADD_MYXXD</name>
<reference key="1">
    <citation type="journal article" date="2006" name="Proc. Natl. Acad. Sci. U.S.A.">
        <title>Evolution of sensory complexity recorded in a myxobacterial genome.</title>
        <authorList>
            <person name="Goldman B.S."/>
            <person name="Nierman W.C."/>
            <person name="Kaiser D."/>
            <person name="Slater S.C."/>
            <person name="Durkin A.S."/>
            <person name="Eisen J.A."/>
            <person name="Ronning C.M."/>
            <person name="Barbazuk W.B."/>
            <person name="Blanchard M."/>
            <person name="Field C."/>
            <person name="Halling C."/>
            <person name="Hinkle G."/>
            <person name="Iartchuk O."/>
            <person name="Kim H.S."/>
            <person name="Mackenzie C."/>
            <person name="Madupu R."/>
            <person name="Miller N."/>
            <person name="Shvartsbeyn A."/>
            <person name="Sullivan S.A."/>
            <person name="Vaudin M."/>
            <person name="Wiegand R."/>
            <person name="Kaplan H.B."/>
        </authorList>
    </citation>
    <scope>NUCLEOTIDE SEQUENCE [LARGE SCALE GENOMIC DNA]</scope>
    <source>
        <strain>DK1622</strain>
    </source>
</reference>
<gene>
    <name evidence="1" type="primary">nadD</name>
    <name type="ordered locus">MXAN_4185</name>
</gene>
<organism>
    <name type="scientific">Myxococcus xanthus (strain DK1622)</name>
    <dbReference type="NCBI Taxonomy" id="246197"/>
    <lineage>
        <taxon>Bacteria</taxon>
        <taxon>Pseudomonadati</taxon>
        <taxon>Myxococcota</taxon>
        <taxon>Myxococcia</taxon>
        <taxon>Myxococcales</taxon>
        <taxon>Cystobacterineae</taxon>
        <taxon>Myxococcaceae</taxon>
        <taxon>Myxococcus</taxon>
    </lineage>
</organism>
<protein>
    <recommendedName>
        <fullName evidence="1">Probable nicotinate-nucleotide adenylyltransferase</fullName>
        <ecNumber evidence="1">2.7.7.18</ecNumber>
    </recommendedName>
    <alternativeName>
        <fullName evidence="1">Deamido-NAD(+) diphosphorylase</fullName>
    </alternativeName>
    <alternativeName>
        <fullName evidence="1">Deamido-NAD(+) pyrophosphorylase</fullName>
    </alternativeName>
    <alternativeName>
        <fullName evidence="1">Nicotinate mononucleotide adenylyltransferase</fullName>
        <shortName evidence="1">NaMN adenylyltransferase</shortName>
    </alternativeName>
</protein>
<accession>Q1D4R3</accession>
<comment type="function">
    <text evidence="1">Catalyzes the reversible adenylation of nicotinate mononucleotide (NaMN) to nicotinic acid adenine dinucleotide (NaAD).</text>
</comment>
<comment type="catalytic activity">
    <reaction evidence="1">
        <text>nicotinate beta-D-ribonucleotide + ATP + H(+) = deamido-NAD(+) + diphosphate</text>
        <dbReference type="Rhea" id="RHEA:22860"/>
        <dbReference type="ChEBI" id="CHEBI:15378"/>
        <dbReference type="ChEBI" id="CHEBI:30616"/>
        <dbReference type="ChEBI" id="CHEBI:33019"/>
        <dbReference type="ChEBI" id="CHEBI:57502"/>
        <dbReference type="ChEBI" id="CHEBI:58437"/>
        <dbReference type="EC" id="2.7.7.18"/>
    </reaction>
</comment>
<comment type="pathway">
    <text evidence="1">Cofactor biosynthesis; NAD(+) biosynthesis; deamido-NAD(+) from nicotinate D-ribonucleotide: step 1/1.</text>
</comment>
<comment type="similarity">
    <text evidence="1">Belongs to the NadD family.</text>
</comment>